<keyword id="KW-0963">Cytoplasm</keyword>
<keyword id="KW-0444">Lipid biosynthesis</keyword>
<keyword id="KW-0443">Lipid metabolism</keyword>
<keyword id="KW-0520">NAD</keyword>
<keyword id="KW-0521">NADP</keyword>
<keyword id="KW-0547">Nucleotide-binding</keyword>
<keyword id="KW-0560">Oxidoreductase</keyword>
<keyword id="KW-0594">Phospholipid biosynthesis</keyword>
<keyword id="KW-1208">Phospholipid metabolism</keyword>
<organism>
    <name type="scientific">Xanthomonas euvesicatoria pv. vesicatoria (strain 85-10)</name>
    <name type="common">Xanthomonas campestris pv. vesicatoria</name>
    <dbReference type="NCBI Taxonomy" id="316273"/>
    <lineage>
        <taxon>Bacteria</taxon>
        <taxon>Pseudomonadati</taxon>
        <taxon>Pseudomonadota</taxon>
        <taxon>Gammaproteobacteria</taxon>
        <taxon>Lysobacterales</taxon>
        <taxon>Lysobacteraceae</taxon>
        <taxon>Xanthomonas</taxon>
    </lineage>
</organism>
<name>GPDA_XANE5</name>
<proteinExistence type="inferred from homology"/>
<feature type="chain" id="PRO_0000255397" description="Glycerol-3-phosphate dehydrogenase [NAD(P)+]">
    <location>
        <begin position="1"/>
        <end position="341"/>
    </location>
</feature>
<feature type="active site" description="Proton acceptor" evidence="1">
    <location>
        <position position="194"/>
    </location>
</feature>
<feature type="binding site" evidence="1">
    <location>
        <position position="15"/>
    </location>
    <ligand>
        <name>NADPH</name>
        <dbReference type="ChEBI" id="CHEBI:57783"/>
    </ligand>
</feature>
<feature type="binding site" evidence="1">
    <location>
        <position position="16"/>
    </location>
    <ligand>
        <name>NADPH</name>
        <dbReference type="ChEBI" id="CHEBI:57783"/>
    </ligand>
</feature>
<feature type="binding site" evidence="1">
    <location>
        <position position="36"/>
    </location>
    <ligand>
        <name>NADPH</name>
        <dbReference type="ChEBI" id="CHEBI:57783"/>
    </ligand>
</feature>
<feature type="binding site" evidence="1">
    <location>
        <position position="110"/>
    </location>
    <ligand>
        <name>NADPH</name>
        <dbReference type="ChEBI" id="CHEBI:57783"/>
    </ligand>
</feature>
<feature type="binding site" evidence="1">
    <location>
        <position position="110"/>
    </location>
    <ligand>
        <name>sn-glycerol 3-phosphate</name>
        <dbReference type="ChEBI" id="CHEBI:57597"/>
    </ligand>
</feature>
<feature type="binding site" evidence="1">
    <location>
        <position position="139"/>
    </location>
    <ligand>
        <name>sn-glycerol 3-phosphate</name>
        <dbReference type="ChEBI" id="CHEBI:57597"/>
    </ligand>
</feature>
<feature type="binding site" evidence="1">
    <location>
        <position position="141"/>
    </location>
    <ligand>
        <name>sn-glycerol 3-phosphate</name>
        <dbReference type="ChEBI" id="CHEBI:57597"/>
    </ligand>
</feature>
<feature type="binding site" evidence="1">
    <location>
        <position position="143"/>
    </location>
    <ligand>
        <name>NADPH</name>
        <dbReference type="ChEBI" id="CHEBI:57783"/>
    </ligand>
</feature>
<feature type="binding site" evidence="1">
    <location>
        <position position="194"/>
    </location>
    <ligand>
        <name>sn-glycerol 3-phosphate</name>
        <dbReference type="ChEBI" id="CHEBI:57597"/>
    </ligand>
</feature>
<feature type="binding site" evidence="1">
    <location>
        <position position="247"/>
    </location>
    <ligand>
        <name>sn-glycerol 3-phosphate</name>
        <dbReference type="ChEBI" id="CHEBI:57597"/>
    </ligand>
</feature>
<feature type="binding site" evidence="1">
    <location>
        <position position="257"/>
    </location>
    <ligand>
        <name>sn-glycerol 3-phosphate</name>
        <dbReference type="ChEBI" id="CHEBI:57597"/>
    </ligand>
</feature>
<feature type="binding site" evidence="1">
    <location>
        <position position="258"/>
    </location>
    <ligand>
        <name>NADPH</name>
        <dbReference type="ChEBI" id="CHEBI:57783"/>
    </ligand>
</feature>
<feature type="binding site" evidence="1">
    <location>
        <position position="258"/>
    </location>
    <ligand>
        <name>sn-glycerol 3-phosphate</name>
        <dbReference type="ChEBI" id="CHEBI:57597"/>
    </ligand>
</feature>
<feature type="binding site" evidence="1">
    <location>
        <position position="259"/>
    </location>
    <ligand>
        <name>sn-glycerol 3-phosphate</name>
        <dbReference type="ChEBI" id="CHEBI:57597"/>
    </ligand>
</feature>
<feature type="binding site" evidence="1">
    <location>
        <position position="282"/>
    </location>
    <ligand>
        <name>NADPH</name>
        <dbReference type="ChEBI" id="CHEBI:57783"/>
    </ligand>
</feature>
<feature type="binding site" evidence="1">
    <location>
        <position position="284"/>
    </location>
    <ligand>
        <name>NADPH</name>
        <dbReference type="ChEBI" id="CHEBI:57783"/>
    </ligand>
</feature>
<sequence>MSDWTHKIAVLGAGSWGTALAALLARHGHPTVLWGRDAAMVDTIDRTHENARYLPGIALPDSLRATTDLQAAVADATWILVVVPSHAFTETIRLIAPLRPAGAGVAWATKGFEPGSGRFLHEVARDILGPSVPLAVVTGPSFAKEVTLGLPTAITVHGDDAAFAQVVADAMHGPTFRAYTGDDMVGAELGGAMKNVLAVATGVADGMQLGLNARAGLITRGLNEMLRLAAVIGARPETLMGLAGLGDLVLTCTGDLSRNRRLGLALGRGQSLDDAIREIGQVVESVQTADEVMRQAEHHGIELPISNAVRAVLHGEITPEAGLKELLARERKPEYPQTLFT</sequence>
<evidence type="ECO:0000255" key="1">
    <source>
        <dbReference type="HAMAP-Rule" id="MF_00394"/>
    </source>
</evidence>
<comment type="function">
    <text evidence="1">Catalyzes the reduction of the glycolytic intermediate dihydroxyacetone phosphate (DHAP) to sn-glycerol 3-phosphate (G3P), the key precursor for phospholipid synthesis.</text>
</comment>
<comment type="catalytic activity">
    <reaction evidence="1">
        <text>sn-glycerol 3-phosphate + NAD(+) = dihydroxyacetone phosphate + NADH + H(+)</text>
        <dbReference type="Rhea" id="RHEA:11092"/>
        <dbReference type="ChEBI" id="CHEBI:15378"/>
        <dbReference type="ChEBI" id="CHEBI:57540"/>
        <dbReference type="ChEBI" id="CHEBI:57597"/>
        <dbReference type="ChEBI" id="CHEBI:57642"/>
        <dbReference type="ChEBI" id="CHEBI:57945"/>
        <dbReference type="EC" id="1.1.1.94"/>
    </reaction>
    <physiologicalReaction direction="right-to-left" evidence="1">
        <dbReference type="Rhea" id="RHEA:11094"/>
    </physiologicalReaction>
</comment>
<comment type="catalytic activity">
    <reaction evidence="1">
        <text>sn-glycerol 3-phosphate + NADP(+) = dihydroxyacetone phosphate + NADPH + H(+)</text>
        <dbReference type="Rhea" id="RHEA:11096"/>
        <dbReference type="ChEBI" id="CHEBI:15378"/>
        <dbReference type="ChEBI" id="CHEBI:57597"/>
        <dbReference type="ChEBI" id="CHEBI:57642"/>
        <dbReference type="ChEBI" id="CHEBI:57783"/>
        <dbReference type="ChEBI" id="CHEBI:58349"/>
        <dbReference type="EC" id="1.1.1.94"/>
    </reaction>
    <physiologicalReaction direction="right-to-left" evidence="1">
        <dbReference type="Rhea" id="RHEA:11098"/>
    </physiologicalReaction>
</comment>
<comment type="pathway">
    <text evidence="1">Membrane lipid metabolism; glycerophospholipid metabolism.</text>
</comment>
<comment type="subcellular location">
    <subcellularLocation>
        <location evidence="1">Cytoplasm</location>
    </subcellularLocation>
</comment>
<comment type="similarity">
    <text evidence="1">Belongs to the NAD-dependent glycerol-3-phosphate dehydrogenase family.</text>
</comment>
<accession>Q3BZ75</accession>
<dbReference type="EC" id="1.1.1.94" evidence="1"/>
<dbReference type="EMBL" id="AM039952">
    <property type="protein sequence ID" value="CAJ21838.1"/>
    <property type="molecule type" value="Genomic_DNA"/>
</dbReference>
<dbReference type="RefSeq" id="WP_008572015.1">
    <property type="nucleotide sequence ID" value="NZ_CP017190.1"/>
</dbReference>
<dbReference type="SMR" id="Q3BZ75"/>
<dbReference type="STRING" id="456327.BJD11_21895"/>
<dbReference type="KEGG" id="xcv:XCV0207"/>
<dbReference type="eggNOG" id="COG0240">
    <property type="taxonomic scope" value="Bacteria"/>
</dbReference>
<dbReference type="HOGENOM" id="CLU_033449_0_2_6"/>
<dbReference type="UniPathway" id="UPA00940"/>
<dbReference type="Proteomes" id="UP000007069">
    <property type="component" value="Chromosome"/>
</dbReference>
<dbReference type="GO" id="GO:0005829">
    <property type="term" value="C:cytosol"/>
    <property type="evidence" value="ECO:0007669"/>
    <property type="project" value="TreeGrafter"/>
</dbReference>
<dbReference type="GO" id="GO:0047952">
    <property type="term" value="F:glycerol-3-phosphate dehydrogenase [NAD(P)+] activity"/>
    <property type="evidence" value="ECO:0007669"/>
    <property type="project" value="UniProtKB-UniRule"/>
</dbReference>
<dbReference type="GO" id="GO:0051287">
    <property type="term" value="F:NAD binding"/>
    <property type="evidence" value="ECO:0007669"/>
    <property type="project" value="InterPro"/>
</dbReference>
<dbReference type="GO" id="GO:0005975">
    <property type="term" value="P:carbohydrate metabolic process"/>
    <property type="evidence" value="ECO:0007669"/>
    <property type="project" value="InterPro"/>
</dbReference>
<dbReference type="GO" id="GO:0046167">
    <property type="term" value="P:glycerol-3-phosphate biosynthetic process"/>
    <property type="evidence" value="ECO:0007669"/>
    <property type="project" value="UniProtKB-UniRule"/>
</dbReference>
<dbReference type="GO" id="GO:0046168">
    <property type="term" value="P:glycerol-3-phosphate catabolic process"/>
    <property type="evidence" value="ECO:0007669"/>
    <property type="project" value="InterPro"/>
</dbReference>
<dbReference type="GO" id="GO:0046474">
    <property type="term" value="P:glycerophospholipid biosynthetic process"/>
    <property type="evidence" value="ECO:0007669"/>
    <property type="project" value="TreeGrafter"/>
</dbReference>
<dbReference type="FunFam" id="1.10.1040.10:FF:000001">
    <property type="entry name" value="Glycerol-3-phosphate dehydrogenase [NAD(P)+]"/>
    <property type="match status" value="1"/>
</dbReference>
<dbReference type="FunFam" id="3.40.50.720:FF:000019">
    <property type="entry name" value="Glycerol-3-phosphate dehydrogenase [NAD(P)+]"/>
    <property type="match status" value="1"/>
</dbReference>
<dbReference type="Gene3D" id="1.10.1040.10">
    <property type="entry name" value="N-(1-d-carboxylethyl)-l-norvaline Dehydrogenase, domain 2"/>
    <property type="match status" value="1"/>
</dbReference>
<dbReference type="Gene3D" id="3.40.50.720">
    <property type="entry name" value="NAD(P)-binding Rossmann-like Domain"/>
    <property type="match status" value="1"/>
</dbReference>
<dbReference type="HAMAP" id="MF_00394">
    <property type="entry name" value="NAD_Glyc3P_dehydrog"/>
    <property type="match status" value="1"/>
</dbReference>
<dbReference type="InterPro" id="IPR008927">
    <property type="entry name" value="6-PGluconate_DH-like_C_sf"/>
</dbReference>
<dbReference type="InterPro" id="IPR013328">
    <property type="entry name" value="6PGD_dom2"/>
</dbReference>
<dbReference type="InterPro" id="IPR006168">
    <property type="entry name" value="G3P_DH_NAD-dep"/>
</dbReference>
<dbReference type="InterPro" id="IPR006109">
    <property type="entry name" value="G3P_DH_NAD-dep_C"/>
</dbReference>
<dbReference type="InterPro" id="IPR011128">
    <property type="entry name" value="G3P_DH_NAD-dep_N"/>
</dbReference>
<dbReference type="InterPro" id="IPR036291">
    <property type="entry name" value="NAD(P)-bd_dom_sf"/>
</dbReference>
<dbReference type="NCBIfam" id="NF000940">
    <property type="entry name" value="PRK00094.1-2"/>
    <property type="match status" value="1"/>
</dbReference>
<dbReference type="NCBIfam" id="NF000942">
    <property type="entry name" value="PRK00094.1-4"/>
    <property type="match status" value="1"/>
</dbReference>
<dbReference type="PANTHER" id="PTHR11728">
    <property type="entry name" value="GLYCEROL-3-PHOSPHATE DEHYDROGENASE"/>
    <property type="match status" value="1"/>
</dbReference>
<dbReference type="PANTHER" id="PTHR11728:SF1">
    <property type="entry name" value="GLYCEROL-3-PHOSPHATE DEHYDROGENASE [NAD(+)] 2, CHLOROPLASTIC"/>
    <property type="match status" value="1"/>
</dbReference>
<dbReference type="Pfam" id="PF07479">
    <property type="entry name" value="NAD_Gly3P_dh_C"/>
    <property type="match status" value="1"/>
</dbReference>
<dbReference type="Pfam" id="PF01210">
    <property type="entry name" value="NAD_Gly3P_dh_N"/>
    <property type="match status" value="1"/>
</dbReference>
<dbReference type="PIRSF" id="PIRSF000114">
    <property type="entry name" value="Glycerol-3-P_dh"/>
    <property type="match status" value="1"/>
</dbReference>
<dbReference type="PRINTS" id="PR00077">
    <property type="entry name" value="GPDHDRGNASE"/>
</dbReference>
<dbReference type="SUPFAM" id="SSF48179">
    <property type="entry name" value="6-phosphogluconate dehydrogenase C-terminal domain-like"/>
    <property type="match status" value="1"/>
</dbReference>
<dbReference type="SUPFAM" id="SSF51735">
    <property type="entry name" value="NAD(P)-binding Rossmann-fold domains"/>
    <property type="match status" value="1"/>
</dbReference>
<dbReference type="PROSITE" id="PS00957">
    <property type="entry name" value="NAD_G3PDH"/>
    <property type="match status" value="1"/>
</dbReference>
<reference key="1">
    <citation type="journal article" date="2005" name="J. Bacteriol.">
        <title>Insights into genome plasticity and pathogenicity of the plant pathogenic Bacterium Xanthomonas campestris pv. vesicatoria revealed by the complete genome sequence.</title>
        <authorList>
            <person name="Thieme F."/>
            <person name="Koebnik R."/>
            <person name="Bekel T."/>
            <person name="Berger C."/>
            <person name="Boch J."/>
            <person name="Buettner D."/>
            <person name="Caldana C."/>
            <person name="Gaigalat L."/>
            <person name="Goesmann A."/>
            <person name="Kay S."/>
            <person name="Kirchner O."/>
            <person name="Lanz C."/>
            <person name="Linke B."/>
            <person name="McHardy A.C."/>
            <person name="Meyer F."/>
            <person name="Mittenhuber G."/>
            <person name="Nies D.H."/>
            <person name="Niesbach-Kloesgen U."/>
            <person name="Patschkowski T."/>
            <person name="Rueckert C."/>
            <person name="Rupp O."/>
            <person name="Schneiker S."/>
            <person name="Schuster S.C."/>
            <person name="Vorhoelter F.J."/>
            <person name="Weber E."/>
            <person name="Puehler A."/>
            <person name="Bonas U."/>
            <person name="Bartels D."/>
            <person name="Kaiser O."/>
        </authorList>
    </citation>
    <scope>NUCLEOTIDE SEQUENCE [LARGE SCALE GENOMIC DNA]</scope>
    <source>
        <strain>85-10</strain>
    </source>
</reference>
<gene>
    <name evidence="1" type="primary">gpsA</name>
    <name type="ordered locus">XCV0207</name>
</gene>
<protein>
    <recommendedName>
        <fullName evidence="1">Glycerol-3-phosphate dehydrogenase [NAD(P)+]</fullName>
        <ecNumber evidence="1">1.1.1.94</ecNumber>
    </recommendedName>
    <alternativeName>
        <fullName evidence="1">NAD(P)(+)-dependent glycerol-3-phosphate dehydrogenase</fullName>
    </alternativeName>
    <alternativeName>
        <fullName evidence="1">NAD(P)H-dependent dihydroxyacetone-phosphate reductase</fullName>
    </alternativeName>
</protein>